<gene>
    <name type="primary">udg</name>
    <name type="ordered locus">RP779</name>
</gene>
<evidence type="ECO:0000250" key="1">
    <source>
        <dbReference type="UniProtKB" id="Q0P8H3"/>
    </source>
</evidence>
<evidence type="ECO:0000255" key="2"/>
<evidence type="ECO:0000305" key="3"/>
<name>UDG_RICPR</name>
<dbReference type="EC" id="1.1.1.22"/>
<dbReference type="EMBL" id="Y11785">
    <property type="protein sequence ID" value="CAA72478.1"/>
    <property type="molecule type" value="Genomic_DNA"/>
</dbReference>
<dbReference type="EMBL" id="AJ235273">
    <property type="protein sequence ID" value="CAA15205.1"/>
    <property type="molecule type" value="Genomic_DNA"/>
</dbReference>
<dbReference type="PIR" id="E71638">
    <property type="entry name" value="E71638"/>
</dbReference>
<dbReference type="RefSeq" id="NP_221129.1">
    <property type="nucleotide sequence ID" value="NC_000963.1"/>
</dbReference>
<dbReference type="RefSeq" id="WP_004596947.1">
    <property type="nucleotide sequence ID" value="NC_000963.1"/>
</dbReference>
<dbReference type="SMR" id="O05973"/>
<dbReference type="STRING" id="272947.gene:17555848"/>
<dbReference type="EnsemblBacteria" id="CAA15205">
    <property type="protein sequence ID" value="CAA15205"/>
    <property type="gene ID" value="CAA15205"/>
</dbReference>
<dbReference type="KEGG" id="rpr:RP779"/>
<dbReference type="PATRIC" id="fig|272947.5.peg.815"/>
<dbReference type="eggNOG" id="COG1004">
    <property type="taxonomic scope" value="Bacteria"/>
</dbReference>
<dbReference type="HOGENOM" id="CLU_023810_1_2_5"/>
<dbReference type="OrthoDB" id="9803238at2"/>
<dbReference type="UniPathway" id="UPA00038">
    <property type="reaction ID" value="UER00491"/>
</dbReference>
<dbReference type="Proteomes" id="UP000002480">
    <property type="component" value="Chromosome"/>
</dbReference>
<dbReference type="GO" id="GO:0051287">
    <property type="term" value="F:NAD binding"/>
    <property type="evidence" value="ECO:0000250"/>
    <property type="project" value="UniProtKB"/>
</dbReference>
<dbReference type="GO" id="GO:0003979">
    <property type="term" value="F:UDP-glucose 6-dehydrogenase activity"/>
    <property type="evidence" value="ECO:0000250"/>
    <property type="project" value="UniProtKB"/>
</dbReference>
<dbReference type="GO" id="GO:0000271">
    <property type="term" value="P:polysaccharide biosynthetic process"/>
    <property type="evidence" value="ECO:0007669"/>
    <property type="project" value="InterPro"/>
</dbReference>
<dbReference type="GO" id="GO:0006065">
    <property type="term" value="P:UDP-glucuronate biosynthetic process"/>
    <property type="evidence" value="ECO:0007669"/>
    <property type="project" value="UniProtKB-UniPathway"/>
</dbReference>
<dbReference type="Gene3D" id="1.20.5.100">
    <property type="entry name" value="Cytochrome c1, transmembrane anchor, C-terminal"/>
    <property type="match status" value="1"/>
</dbReference>
<dbReference type="Gene3D" id="3.40.50.720">
    <property type="entry name" value="NAD(P)-binding Rossmann-like Domain"/>
    <property type="match status" value="2"/>
</dbReference>
<dbReference type="InterPro" id="IPR008927">
    <property type="entry name" value="6-PGluconate_DH-like_C_sf"/>
</dbReference>
<dbReference type="InterPro" id="IPR036291">
    <property type="entry name" value="NAD(P)-bd_dom_sf"/>
</dbReference>
<dbReference type="InterPro" id="IPR017476">
    <property type="entry name" value="UDP-Glc/GDP-Man"/>
</dbReference>
<dbReference type="InterPro" id="IPR014027">
    <property type="entry name" value="UDP-Glc/GDP-Man_DH_C"/>
</dbReference>
<dbReference type="InterPro" id="IPR036220">
    <property type="entry name" value="UDP-Glc/GDP-Man_DH_C_sf"/>
</dbReference>
<dbReference type="InterPro" id="IPR014026">
    <property type="entry name" value="UDP-Glc/GDP-Man_DH_dimer"/>
</dbReference>
<dbReference type="InterPro" id="IPR001732">
    <property type="entry name" value="UDP-Glc/GDP-Man_DH_N"/>
</dbReference>
<dbReference type="InterPro" id="IPR028357">
    <property type="entry name" value="UDPglc_DH_bac"/>
</dbReference>
<dbReference type="NCBIfam" id="TIGR03026">
    <property type="entry name" value="NDP-sugDHase"/>
    <property type="match status" value="1"/>
</dbReference>
<dbReference type="PANTHER" id="PTHR43750">
    <property type="entry name" value="UDP-GLUCOSE 6-DEHYDROGENASE TUAD"/>
    <property type="match status" value="1"/>
</dbReference>
<dbReference type="PANTHER" id="PTHR43750:SF3">
    <property type="entry name" value="UDP-GLUCOSE 6-DEHYDROGENASE TUAD"/>
    <property type="match status" value="1"/>
</dbReference>
<dbReference type="Pfam" id="PF00984">
    <property type="entry name" value="UDPG_MGDP_dh"/>
    <property type="match status" value="1"/>
</dbReference>
<dbReference type="Pfam" id="PF03720">
    <property type="entry name" value="UDPG_MGDP_dh_C"/>
    <property type="match status" value="1"/>
</dbReference>
<dbReference type="Pfam" id="PF03721">
    <property type="entry name" value="UDPG_MGDP_dh_N"/>
    <property type="match status" value="1"/>
</dbReference>
<dbReference type="PIRSF" id="PIRSF500134">
    <property type="entry name" value="UDPglc_DH_bac"/>
    <property type="match status" value="1"/>
</dbReference>
<dbReference type="PIRSF" id="PIRSF000124">
    <property type="entry name" value="UDPglc_GDPman_dh"/>
    <property type="match status" value="1"/>
</dbReference>
<dbReference type="SMART" id="SM00984">
    <property type="entry name" value="UDPG_MGDP_dh_C"/>
    <property type="match status" value="1"/>
</dbReference>
<dbReference type="SUPFAM" id="SSF48179">
    <property type="entry name" value="6-phosphogluconate dehydrogenase C-terminal domain-like"/>
    <property type="match status" value="1"/>
</dbReference>
<dbReference type="SUPFAM" id="SSF51735">
    <property type="entry name" value="NAD(P)-binding Rossmann-fold domains"/>
    <property type="match status" value="1"/>
</dbReference>
<dbReference type="SUPFAM" id="SSF52413">
    <property type="entry name" value="UDP-glucose/GDP-mannose dehydrogenase C-terminal domain"/>
    <property type="match status" value="1"/>
</dbReference>
<sequence length="434" mass="48226">MNITFIGSGYVGLVSGIIMGYLGHNVTCLDNDDVKISKLNKKILPIYEAKLDEYLKHALESDRLKFTNIYSNEFRNFDAIFITVGTPSKELGEADLKYVYDAVDKVSKHINKDCLIVIKSTVPPGSCNNIIAYLKAKGFSFNVASNPEFLREGSAVEDFLYPDRIVVGVNNKESEALLRKIYAPLIEQGAKFLVTNLVTSELIKYVSNSFLATKIAFINEMADLCEKIGANIKDLSQGVGLDQRIGRNFLNAGPGFGGSCFPKDILALNNLVENHKIDCKILKSVIKSNKLRPSNMVAKIATLLDGDLKGRNIAILGLTYKAGTDDVRASPAIEIITILLNKDVYVKAFDPIGLENAKKNLEHKNLLYFASAVEACKSVDIIVIATEWSEFKELNWQEIYNLVKSPMIIDLRNILDNEVMKKIGFRYYAVGSQI</sequence>
<organism>
    <name type="scientific">Rickettsia prowazekii (strain Madrid E)</name>
    <dbReference type="NCBI Taxonomy" id="272947"/>
    <lineage>
        <taxon>Bacteria</taxon>
        <taxon>Pseudomonadati</taxon>
        <taxon>Pseudomonadota</taxon>
        <taxon>Alphaproteobacteria</taxon>
        <taxon>Rickettsiales</taxon>
        <taxon>Rickettsiaceae</taxon>
        <taxon>Rickettsieae</taxon>
        <taxon>Rickettsia</taxon>
        <taxon>typhus group</taxon>
    </lineage>
</organism>
<keyword id="KW-0520">NAD</keyword>
<keyword id="KW-0560">Oxidoreductase</keyword>
<keyword id="KW-1185">Reference proteome</keyword>
<accession>O05973</accession>
<protein>
    <recommendedName>
        <fullName>UDP-glucose 6-dehydrogenase</fullName>
        <shortName>UDP-Glc dehydrogenase</shortName>
        <shortName>UDP-GlcDH</shortName>
        <shortName>UDPGDH</shortName>
        <ecNumber>1.1.1.22</ecNumber>
    </recommendedName>
</protein>
<comment type="catalytic activity">
    <reaction>
        <text>UDP-alpha-D-glucose + 2 NAD(+) + H2O = UDP-alpha-D-glucuronate + 2 NADH + 3 H(+)</text>
        <dbReference type="Rhea" id="RHEA:23596"/>
        <dbReference type="ChEBI" id="CHEBI:15377"/>
        <dbReference type="ChEBI" id="CHEBI:15378"/>
        <dbReference type="ChEBI" id="CHEBI:57540"/>
        <dbReference type="ChEBI" id="CHEBI:57945"/>
        <dbReference type="ChEBI" id="CHEBI:58052"/>
        <dbReference type="ChEBI" id="CHEBI:58885"/>
        <dbReference type="EC" id="1.1.1.22"/>
    </reaction>
</comment>
<comment type="pathway">
    <text>Nucleotide-sugar biosynthesis; UDP-alpha-D-glucuronate biosynthesis; UDP-alpha-D-glucuronate from UDP-alpha-D-glucose: step 1/1.</text>
</comment>
<comment type="similarity">
    <text evidence="3">Belongs to the UDP-glucose/GDP-mannose dehydrogenase family.</text>
</comment>
<proteinExistence type="inferred from homology"/>
<reference key="1">
    <citation type="journal article" date="1997" name="Microbiology">
        <title>Genomic rearrangements during evolution of the obligate intracellular parasite Rickettsia prowazekii as inferred from an analysis of 52015 bp nucleotide sequence.</title>
        <authorList>
            <person name="Andersson J.O."/>
            <person name="Andersson S.G.E."/>
        </authorList>
    </citation>
    <scope>NUCLEOTIDE SEQUENCE [GENOMIC DNA]</scope>
    <source>
        <strain>Madrid E</strain>
    </source>
</reference>
<reference key="2">
    <citation type="journal article" date="1998" name="Nature">
        <title>The genome sequence of Rickettsia prowazekii and the origin of mitochondria.</title>
        <authorList>
            <person name="Andersson S.G.E."/>
            <person name="Zomorodipour A."/>
            <person name="Andersson J.O."/>
            <person name="Sicheritz-Ponten T."/>
            <person name="Alsmark U.C.M."/>
            <person name="Podowski R.M."/>
            <person name="Naeslund A.K."/>
            <person name="Eriksson A.-S."/>
            <person name="Winkler H.H."/>
            <person name="Kurland C.G."/>
        </authorList>
    </citation>
    <scope>NUCLEOTIDE SEQUENCE [LARGE SCALE GENOMIC DNA]</scope>
    <source>
        <strain>Madrid E</strain>
    </source>
</reference>
<feature type="chain" id="PRO_0000074052" description="UDP-glucose 6-dehydrogenase">
    <location>
        <begin position="1"/>
        <end position="434"/>
    </location>
</feature>
<feature type="active site" description="Nucleophile" evidence="1">
    <location>
        <position position="260"/>
    </location>
</feature>
<feature type="binding site" evidence="2">
    <location>
        <begin position="2"/>
        <end position="19"/>
    </location>
    <ligand>
        <name>NAD(+)</name>
        <dbReference type="ChEBI" id="CHEBI:57540"/>
    </ligand>
</feature>
<feature type="binding site" evidence="1">
    <location>
        <position position="11"/>
    </location>
    <ligand>
        <name>NAD(+)</name>
        <dbReference type="ChEBI" id="CHEBI:57540"/>
    </ligand>
</feature>
<feature type="binding site" evidence="1">
    <location>
        <position position="30"/>
    </location>
    <ligand>
        <name>NAD(+)</name>
        <dbReference type="ChEBI" id="CHEBI:57540"/>
    </ligand>
</feature>
<feature type="binding site" evidence="1">
    <location>
        <position position="35"/>
    </location>
    <ligand>
        <name>NAD(+)</name>
        <dbReference type="ChEBI" id="CHEBI:57540"/>
    </ligand>
</feature>
<feature type="binding site" evidence="1">
    <location>
        <position position="121"/>
    </location>
    <ligand>
        <name>NAD(+)</name>
        <dbReference type="ChEBI" id="CHEBI:57540"/>
    </ligand>
</feature>
<feature type="binding site" evidence="1">
    <location>
        <begin position="148"/>
        <end position="152"/>
    </location>
    <ligand>
        <name>substrate</name>
    </ligand>
</feature>
<feature type="binding site" evidence="1">
    <location>
        <position position="152"/>
    </location>
    <ligand>
        <name>NAD(+)</name>
        <dbReference type="ChEBI" id="CHEBI:57540"/>
    </ligand>
</feature>
<feature type="binding site" evidence="1">
    <location>
        <position position="204"/>
    </location>
    <ligand>
        <name>substrate</name>
    </ligand>
</feature>
<feature type="binding site" evidence="1">
    <location>
        <position position="208"/>
    </location>
    <ligand>
        <name>substrate</name>
    </ligand>
</feature>
<feature type="binding site" evidence="1">
    <location>
        <begin position="249"/>
        <end position="253"/>
    </location>
    <ligand>
        <name>substrate</name>
    </ligand>
</feature>
<feature type="binding site" evidence="1">
    <location>
        <position position="257"/>
    </location>
    <ligand>
        <name>substrate</name>
    </ligand>
</feature>
<feature type="binding site" evidence="1">
    <location>
        <position position="263"/>
    </location>
    <ligand>
        <name>NAD(+)</name>
        <dbReference type="ChEBI" id="CHEBI:57540"/>
    </ligand>
</feature>
<feature type="binding site" evidence="1">
    <location>
        <position position="321"/>
    </location>
    <ligand>
        <name>substrate</name>
    </ligand>
</feature>
<feature type="binding site" evidence="1">
    <location>
        <position position="328"/>
    </location>
    <ligand>
        <name>NAD(+)</name>
        <dbReference type="ChEBI" id="CHEBI:57540"/>
    </ligand>
</feature>